<dbReference type="EC" id="3.2.2.23" evidence="2"/>
<dbReference type="EC" id="4.2.99.18" evidence="2"/>
<dbReference type="EMBL" id="AM260525">
    <property type="protein sequence ID" value="CAK00746.1"/>
    <property type="molecule type" value="Genomic_DNA"/>
</dbReference>
<dbReference type="RefSeq" id="WP_012230700.1">
    <property type="nucleotide sequence ID" value="NC_010161.1"/>
</dbReference>
<dbReference type="SMR" id="A9IN26"/>
<dbReference type="KEGG" id="btr:BT_0275"/>
<dbReference type="eggNOG" id="COG0266">
    <property type="taxonomic scope" value="Bacteria"/>
</dbReference>
<dbReference type="HOGENOM" id="CLU_038423_1_1_5"/>
<dbReference type="Proteomes" id="UP000001592">
    <property type="component" value="Chromosome"/>
</dbReference>
<dbReference type="GO" id="GO:0034039">
    <property type="term" value="F:8-oxo-7,8-dihydroguanine DNA N-glycosylase activity"/>
    <property type="evidence" value="ECO:0007669"/>
    <property type="project" value="TreeGrafter"/>
</dbReference>
<dbReference type="GO" id="GO:0140078">
    <property type="term" value="F:class I DNA-(apurinic or apyrimidinic site) endonuclease activity"/>
    <property type="evidence" value="ECO:0007669"/>
    <property type="project" value="UniProtKB-EC"/>
</dbReference>
<dbReference type="GO" id="GO:0003684">
    <property type="term" value="F:damaged DNA binding"/>
    <property type="evidence" value="ECO:0007669"/>
    <property type="project" value="InterPro"/>
</dbReference>
<dbReference type="GO" id="GO:0008270">
    <property type="term" value="F:zinc ion binding"/>
    <property type="evidence" value="ECO:0007669"/>
    <property type="project" value="UniProtKB-UniRule"/>
</dbReference>
<dbReference type="GO" id="GO:0006284">
    <property type="term" value="P:base-excision repair"/>
    <property type="evidence" value="ECO:0007669"/>
    <property type="project" value="InterPro"/>
</dbReference>
<dbReference type="CDD" id="cd08966">
    <property type="entry name" value="EcFpg-like_N"/>
    <property type="match status" value="1"/>
</dbReference>
<dbReference type="FunFam" id="1.10.8.50:FF:000003">
    <property type="entry name" value="Formamidopyrimidine-DNA glycosylase"/>
    <property type="match status" value="1"/>
</dbReference>
<dbReference type="Gene3D" id="1.10.8.50">
    <property type="match status" value="1"/>
</dbReference>
<dbReference type="Gene3D" id="3.20.190.10">
    <property type="entry name" value="MutM-like, N-terminal"/>
    <property type="match status" value="1"/>
</dbReference>
<dbReference type="HAMAP" id="MF_00103">
    <property type="entry name" value="Fapy_DNA_glycosyl"/>
    <property type="match status" value="1"/>
</dbReference>
<dbReference type="InterPro" id="IPR015886">
    <property type="entry name" value="DNA_glyclase/AP_lyase_DNA-bd"/>
</dbReference>
<dbReference type="InterPro" id="IPR015887">
    <property type="entry name" value="DNA_glyclase_Znf_dom_DNA_BS"/>
</dbReference>
<dbReference type="InterPro" id="IPR020629">
    <property type="entry name" value="Formamido-pyr_DNA_Glyclase"/>
</dbReference>
<dbReference type="InterPro" id="IPR012319">
    <property type="entry name" value="FPG_cat"/>
</dbReference>
<dbReference type="InterPro" id="IPR035937">
    <property type="entry name" value="MutM-like_N-ter"/>
</dbReference>
<dbReference type="InterPro" id="IPR010979">
    <property type="entry name" value="Ribosomal_uS13-like_H2TH"/>
</dbReference>
<dbReference type="InterPro" id="IPR000214">
    <property type="entry name" value="Znf_DNA_glyclase/AP_lyase"/>
</dbReference>
<dbReference type="InterPro" id="IPR010663">
    <property type="entry name" value="Znf_FPG/IleRS"/>
</dbReference>
<dbReference type="NCBIfam" id="TIGR00577">
    <property type="entry name" value="fpg"/>
    <property type="match status" value="1"/>
</dbReference>
<dbReference type="NCBIfam" id="NF002211">
    <property type="entry name" value="PRK01103.1"/>
    <property type="match status" value="1"/>
</dbReference>
<dbReference type="PANTHER" id="PTHR22993">
    <property type="entry name" value="FORMAMIDOPYRIMIDINE-DNA GLYCOSYLASE"/>
    <property type="match status" value="1"/>
</dbReference>
<dbReference type="PANTHER" id="PTHR22993:SF9">
    <property type="entry name" value="FORMAMIDOPYRIMIDINE-DNA GLYCOSYLASE"/>
    <property type="match status" value="1"/>
</dbReference>
<dbReference type="Pfam" id="PF01149">
    <property type="entry name" value="Fapy_DNA_glyco"/>
    <property type="match status" value="1"/>
</dbReference>
<dbReference type="Pfam" id="PF06831">
    <property type="entry name" value="H2TH"/>
    <property type="match status" value="1"/>
</dbReference>
<dbReference type="Pfam" id="PF06827">
    <property type="entry name" value="zf-FPG_IleRS"/>
    <property type="match status" value="1"/>
</dbReference>
<dbReference type="SMART" id="SM00898">
    <property type="entry name" value="Fapy_DNA_glyco"/>
    <property type="match status" value="1"/>
</dbReference>
<dbReference type="SMART" id="SM01232">
    <property type="entry name" value="H2TH"/>
    <property type="match status" value="1"/>
</dbReference>
<dbReference type="SUPFAM" id="SSF57716">
    <property type="entry name" value="Glucocorticoid receptor-like (DNA-binding domain)"/>
    <property type="match status" value="1"/>
</dbReference>
<dbReference type="SUPFAM" id="SSF81624">
    <property type="entry name" value="N-terminal domain of MutM-like DNA repair proteins"/>
    <property type="match status" value="1"/>
</dbReference>
<dbReference type="SUPFAM" id="SSF46946">
    <property type="entry name" value="S13-like H2TH domain"/>
    <property type="match status" value="1"/>
</dbReference>
<dbReference type="PROSITE" id="PS51068">
    <property type="entry name" value="FPG_CAT"/>
    <property type="match status" value="1"/>
</dbReference>
<dbReference type="PROSITE" id="PS01242">
    <property type="entry name" value="ZF_FPG_1"/>
    <property type="match status" value="1"/>
</dbReference>
<dbReference type="PROSITE" id="PS51066">
    <property type="entry name" value="ZF_FPG_2"/>
    <property type="match status" value="1"/>
</dbReference>
<sequence>MPELPEVETVRRGLESVVTDAKIVSVQLNRRDLRFPFPEAFSERLIGRKILELGRRAKYLLFHLSQDETILSHLGMSGSWRIENDLLRTAFSMTSKLVKHDHFIMDIQTRNGDVYHLIYNDVRRFGFMLLVDTDKLYKHPLLNKLGLEPMSHGFSGRYLQKAFVNKKVSLKGVLLDQSIVAGLGNIYVCEALWRSRLSPQRGAFTLASKTVYARELANSLAQNIRNVISEAILSGGSSLRDYMHVDGSLGYFQHAFSVYGREGKECLQCGTPIIRILQSGRSSFYCSQCQK</sequence>
<accession>A9IN26</accession>
<proteinExistence type="inferred from homology"/>
<protein>
    <recommendedName>
        <fullName evidence="2">Formamidopyrimidine-DNA glycosylase</fullName>
        <shortName evidence="2">Fapy-DNA glycosylase</shortName>
        <ecNumber evidence="2">3.2.2.23</ecNumber>
    </recommendedName>
    <alternativeName>
        <fullName evidence="2">DNA-(apurinic or apyrimidinic site) lyase MutM</fullName>
        <shortName evidence="2">AP lyase MutM</shortName>
        <ecNumber evidence="2">4.2.99.18</ecNumber>
    </alternativeName>
</protein>
<evidence type="ECO:0000250" key="1"/>
<evidence type="ECO:0000255" key="2">
    <source>
        <dbReference type="HAMAP-Rule" id="MF_00103"/>
    </source>
</evidence>
<name>FPG_BART1</name>
<gene>
    <name evidence="2" type="primary">mutM</name>
    <name evidence="2" type="synonym">fpg</name>
    <name type="ordered locus">BT_0275</name>
</gene>
<reference key="1">
    <citation type="journal article" date="2007" name="Nat. Genet.">
        <title>Genomic analysis of Bartonella identifies type IV secretion systems as host adaptability factors.</title>
        <authorList>
            <person name="Saenz H.L."/>
            <person name="Engel P."/>
            <person name="Stoeckli M.C."/>
            <person name="Lanz C."/>
            <person name="Raddatz G."/>
            <person name="Vayssier-Taussat M."/>
            <person name="Birtles R."/>
            <person name="Schuster S.C."/>
            <person name="Dehio C."/>
        </authorList>
    </citation>
    <scope>NUCLEOTIDE SEQUENCE [LARGE SCALE GENOMIC DNA]</scope>
    <source>
        <strain>CIP 105476 / IBS 506</strain>
    </source>
</reference>
<feature type="initiator methionine" description="Removed" evidence="1">
    <location>
        <position position="1"/>
    </location>
</feature>
<feature type="chain" id="PRO_1000075692" description="Formamidopyrimidine-DNA glycosylase">
    <location>
        <begin position="2"/>
        <end position="291"/>
    </location>
</feature>
<feature type="zinc finger region" description="FPG-type" evidence="2">
    <location>
        <begin position="257"/>
        <end position="291"/>
    </location>
</feature>
<feature type="active site" description="Schiff-base intermediate with DNA" evidence="2">
    <location>
        <position position="2"/>
    </location>
</feature>
<feature type="active site" description="Proton donor" evidence="2">
    <location>
        <position position="3"/>
    </location>
</feature>
<feature type="active site" description="Proton donor; for beta-elimination activity" evidence="2">
    <location>
        <position position="58"/>
    </location>
</feature>
<feature type="active site" description="Proton donor; for delta-elimination activity" evidence="2">
    <location>
        <position position="281"/>
    </location>
</feature>
<feature type="binding site" evidence="2">
    <location>
        <position position="100"/>
    </location>
    <ligand>
        <name>DNA</name>
        <dbReference type="ChEBI" id="CHEBI:16991"/>
    </ligand>
</feature>
<feature type="binding site" evidence="2">
    <location>
        <position position="123"/>
    </location>
    <ligand>
        <name>DNA</name>
        <dbReference type="ChEBI" id="CHEBI:16991"/>
    </ligand>
</feature>
<feature type="binding site" evidence="2">
    <location>
        <position position="166"/>
    </location>
    <ligand>
        <name>DNA</name>
        <dbReference type="ChEBI" id="CHEBI:16991"/>
    </ligand>
</feature>
<keyword id="KW-0227">DNA damage</keyword>
<keyword id="KW-0234">DNA repair</keyword>
<keyword id="KW-0238">DNA-binding</keyword>
<keyword id="KW-0326">Glycosidase</keyword>
<keyword id="KW-0378">Hydrolase</keyword>
<keyword id="KW-0456">Lyase</keyword>
<keyword id="KW-0479">Metal-binding</keyword>
<keyword id="KW-0511">Multifunctional enzyme</keyword>
<keyword id="KW-0862">Zinc</keyword>
<keyword id="KW-0863">Zinc-finger</keyword>
<comment type="function">
    <text evidence="2">Involved in base excision repair of DNA damaged by oxidation or by mutagenic agents. Acts as a DNA glycosylase that recognizes and removes damaged bases. Has a preference for oxidized purines, such as 7,8-dihydro-8-oxoguanine (8-oxoG). Has AP (apurinic/apyrimidinic) lyase activity and introduces nicks in the DNA strand. Cleaves the DNA backbone by beta-delta elimination to generate a single-strand break at the site of the removed base with both 3'- and 5'-phosphates.</text>
</comment>
<comment type="catalytic activity">
    <reaction evidence="2">
        <text>Hydrolysis of DNA containing ring-opened 7-methylguanine residues, releasing 2,6-diamino-4-hydroxy-5-(N-methyl)formamidopyrimidine.</text>
        <dbReference type="EC" id="3.2.2.23"/>
    </reaction>
</comment>
<comment type="catalytic activity">
    <reaction evidence="2">
        <text>2'-deoxyribonucleotide-(2'-deoxyribose 5'-phosphate)-2'-deoxyribonucleotide-DNA = a 3'-end 2'-deoxyribonucleotide-(2,3-dehydro-2,3-deoxyribose 5'-phosphate)-DNA + a 5'-end 5'-phospho-2'-deoxyribonucleoside-DNA + H(+)</text>
        <dbReference type="Rhea" id="RHEA:66592"/>
        <dbReference type="Rhea" id="RHEA-COMP:13180"/>
        <dbReference type="Rhea" id="RHEA-COMP:16897"/>
        <dbReference type="Rhea" id="RHEA-COMP:17067"/>
        <dbReference type="ChEBI" id="CHEBI:15378"/>
        <dbReference type="ChEBI" id="CHEBI:136412"/>
        <dbReference type="ChEBI" id="CHEBI:157695"/>
        <dbReference type="ChEBI" id="CHEBI:167181"/>
        <dbReference type="EC" id="4.2.99.18"/>
    </reaction>
</comment>
<comment type="cofactor">
    <cofactor evidence="2">
        <name>Zn(2+)</name>
        <dbReference type="ChEBI" id="CHEBI:29105"/>
    </cofactor>
    <text evidence="2">Binds 1 zinc ion per subunit.</text>
</comment>
<comment type="subunit">
    <text evidence="2">Monomer.</text>
</comment>
<comment type="similarity">
    <text evidence="2">Belongs to the FPG family.</text>
</comment>
<organism>
    <name type="scientific">Bartonella tribocorum (strain CIP 105476 / IBS 506)</name>
    <dbReference type="NCBI Taxonomy" id="382640"/>
    <lineage>
        <taxon>Bacteria</taxon>
        <taxon>Pseudomonadati</taxon>
        <taxon>Pseudomonadota</taxon>
        <taxon>Alphaproteobacteria</taxon>
        <taxon>Hyphomicrobiales</taxon>
        <taxon>Bartonellaceae</taxon>
        <taxon>Bartonella</taxon>
    </lineage>
</organism>